<gene>
    <name type="primary">pik3r5</name>
</gene>
<evidence type="ECO:0000250" key="1"/>
<evidence type="ECO:0000250" key="2">
    <source>
        <dbReference type="UniProtKB" id="O02696"/>
    </source>
</evidence>
<evidence type="ECO:0000256" key="3">
    <source>
        <dbReference type="SAM" id="MobiDB-lite"/>
    </source>
</evidence>
<evidence type="ECO:0000305" key="4"/>
<protein>
    <recommendedName>
        <fullName>Phosphoinositide 3-kinase regulatory subunit 5</fullName>
        <shortName>PI3-kinase regulatory subunit 5</shortName>
    </recommendedName>
</protein>
<comment type="function">
    <text evidence="1">Regulatory subunit of the PI3K gamma complex. Required for recruitment of the catalytic subunit to the plasma membrane via interaction with beta-gamma G protein dimers. Required for G protein-mediated activation of PIK3CG (By similarity).</text>
</comment>
<comment type="activity regulation">
    <text evidence="1">Greatly activated by G gamma proteins.</text>
</comment>
<comment type="subunit">
    <text evidence="1">Heterodimer. Interacts with a catalytic subunit and with beta-gamma G protein dimers (By similarity).</text>
</comment>
<comment type="subcellular location">
    <subcellularLocation>
        <location evidence="2">Nucleus</location>
    </subcellularLocation>
    <subcellularLocation>
        <location evidence="2">Cytoplasm</location>
    </subcellularLocation>
    <subcellularLocation>
        <location evidence="2">Cell membrane</location>
        <topology evidence="2">Peripheral membrane protein</topology>
    </subcellularLocation>
</comment>
<comment type="domain">
    <text evidence="1">The heterodimerization region allows the binding to the catalytic subunit.</text>
</comment>
<comment type="sequence caution" evidence="4">
    <conflict type="erroneous initiation">
        <sequence resource="EMBL-CDS" id="AAH72301"/>
    </conflict>
</comment>
<keyword id="KW-1003">Cell membrane</keyword>
<keyword id="KW-0963">Cytoplasm</keyword>
<keyword id="KW-0472">Membrane</keyword>
<keyword id="KW-0539">Nucleus</keyword>
<keyword id="KW-1185">Reference proteome</keyword>
<sequence length="879" mass="98929">MQNTSCTEDRIQHALERCLHGLSGSTDISSNWTAGLCLNYWSLEELVNRDATNYIILAEKTLARTREAQKNGEYELLTPLALMFYFAVLRAPYIPETSDLLPKAFEVFHTFLTWPAPYCHVYQEMLSFISEEQKAPGITYQRLVRTEQGIPTRSSCSSTATVLLVNPAELPSEFLSVAEQLSNAEQPIQQTLVSLIQHLFQASLGTHAHTEELGASLKSRPIEKLQEIYSDLTEAMEHATMADIKPGKKRESLKAKLLEVAEKAGLMQGNTGSSLTSRIQPIFMPVAKCYTYSWDQDDFDILNQILLSESHLESLEDDVTEEDEEVDFEEVDDKDEDGGKSPKQDSVFSNSYVYWNFPSDSKEDPSMSMSNLASHSMTFVSSLSSCVDSGYVEDSDEGSQEISEIGEYQEERANNKLKQKICQLFKTKGHQAKDKLKAELSPCISHPLLSPFPDISKTIPLRRAGSMYTPQLSRIPVRSKRSKSLPQPAFGTQFLDLQLSQKVAFKRRPFLSCDDDTKVSTLRIVVFGSDRISGKVARAYSNLRLKESSCPLLTRFFKLQFYYIPVKRSSSSTNAPMTNAESPLKSPSPSGRFPLQDVFGDEASTNDISHYIGILDPWYKRNIMGLMDLSTSMLCQSSKEENETTETTTMPILADMVLYYCRFATRSLLLQLYRAEITFDSGGKQTEVFIQCLELGHSADLRAIRASGPGCKRLGIDGDQDVIPFTLQIVYSKSTVSGRSRWSNGEKVCTSVSLRKACNTYEELDSKMECLNLTVREVVKRQNSKTKKSFNQICTSHIKIDKAQIIAQHGGTFPLCLDQDERKILQRVIKCEVSPCYKPEDRDFCRRNRRPSWSQASQNQSEFCSLLCLPIATFCGAQP</sequence>
<proteinExistence type="evidence at transcript level"/>
<accession>Q6INI0</accession>
<organism>
    <name type="scientific">Xenopus laevis</name>
    <name type="common">African clawed frog</name>
    <dbReference type="NCBI Taxonomy" id="8355"/>
    <lineage>
        <taxon>Eukaryota</taxon>
        <taxon>Metazoa</taxon>
        <taxon>Chordata</taxon>
        <taxon>Craniata</taxon>
        <taxon>Vertebrata</taxon>
        <taxon>Euteleostomi</taxon>
        <taxon>Amphibia</taxon>
        <taxon>Batrachia</taxon>
        <taxon>Anura</taxon>
        <taxon>Pipoidea</taxon>
        <taxon>Pipidae</taxon>
        <taxon>Xenopodinae</taxon>
        <taxon>Xenopus</taxon>
        <taxon>Xenopus</taxon>
    </lineage>
</organism>
<feature type="chain" id="PRO_0000058424" description="Phosphoinositide 3-kinase regulatory subunit 5">
    <location>
        <begin position="1"/>
        <end position="879"/>
    </location>
</feature>
<feature type="region of interest" description="Heterodimerization" evidence="1">
    <location>
        <begin position="23"/>
        <end position="100"/>
    </location>
</feature>
<feature type="region of interest" description="Disordered" evidence="3">
    <location>
        <begin position="314"/>
        <end position="345"/>
    </location>
</feature>
<feature type="region of interest" description="Disordered" evidence="3">
    <location>
        <begin position="570"/>
        <end position="590"/>
    </location>
</feature>
<feature type="region of interest" description="Interaction with beta-gamma G protein dimers" evidence="1">
    <location>
        <begin position="651"/>
        <end position="751"/>
    </location>
</feature>
<feature type="compositionally biased region" description="Acidic residues" evidence="3">
    <location>
        <begin position="315"/>
        <end position="336"/>
    </location>
</feature>
<feature type="compositionally biased region" description="Polar residues" evidence="3">
    <location>
        <begin position="570"/>
        <end position="589"/>
    </location>
</feature>
<reference key="1">
    <citation type="submission" date="2004-06" db="EMBL/GenBank/DDBJ databases">
        <authorList>
            <consortium name="NIH - Xenopus Gene Collection (XGC) project"/>
        </authorList>
    </citation>
    <scope>NUCLEOTIDE SEQUENCE [LARGE SCALE MRNA]</scope>
    <source>
        <tissue>Spleen</tissue>
    </source>
</reference>
<dbReference type="EMBL" id="BC072301">
    <property type="protein sequence ID" value="AAH72301.1"/>
    <property type="status" value="ALT_INIT"/>
    <property type="molecule type" value="mRNA"/>
</dbReference>
<dbReference type="SMR" id="Q6INI0"/>
<dbReference type="AGR" id="Xenbase:XB-GENE-1015962"/>
<dbReference type="Xenbase" id="XB-GENE-1015962">
    <property type="gene designation" value="pik3r5.S"/>
</dbReference>
<dbReference type="Proteomes" id="UP000186698">
    <property type="component" value="Unplaced"/>
</dbReference>
<dbReference type="GO" id="GO:0005737">
    <property type="term" value="C:cytoplasm"/>
    <property type="evidence" value="ECO:0000250"/>
    <property type="project" value="UniProtKB"/>
</dbReference>
<dbReference type="GO" id="GO:0016020">
    <property type="term" value="C:membrane"/>
    <property type="evidence" value="ECO:0000250"/>
    <property type="project" value="UniProtKB"/>
</dbReference>
<dbReference type="GO" id="GO:0005634">
    <property type="term" value="C:nucleus"/>
    <property type="evidence" value="ECO:0007669"/>
    <property type="project" value="UniProtKB-SubCell"/>
</dbReference>
<dbReference type="GO" id="GO:0005942">
    <property type="term" value="C:phosphatidylinositol 3-kinase complex"/>
    <property type="evidence" value="ECO:0000318"/>
    <property type="project" value="GO_Central"/>
</dbReference>
<dbReference type="GO" id="GO:0005944">
    <property type="term" value="C:phosphatidylinositol 3-kinase complex, class IB"/>
    <property type="evidence" value="ECO:0000250"/>
    <property type="project" value="UniProtKB"/>
</dbReference>
<dbReference type="GO" id="GO:0005886">
    <property type="term" value="C:plasma membrane"/>
    <property type="evidence" value="ECO:0007669"/>
    <property type="project" value="UniProtKB-SubCell"/>
</dbReference>
<dbReference type="GO" id="GO:0046935">
    <property type="term" value="F:1-phosphatidylinositol-3-kinase regulator activity"/>
    <property type="evidence" value="ECO:0000318"/>
    <property type="project" value="GO_Central"/>
</dbReference>
<dbReference type="GO" id="GO:0031683">
    <property type="term" value="F:G-protein beta/gamma-subunit complex binding"/>
    <property type="evidence" value="ECO:0000250"/>
    <property type="project" value="UniProtKB"/>
</dbReference>
<dbReference type="GO" id="GO:0007186">
    <property type="term" value="P:G protein-coupled receptor signaling pathway"/>
    <property type="evidence" value="ECO:0000250"/>
    <property type="project" value="UniProtKB"/>
</dbReference>
<dbReference type="GO" id="GO:0043491">
    <property type="term" value="P:phosphatidylinositol 3-kinase/protein kinase B signal transduction"/>
    <property type="evidence" value="ECO:0000250"/>
    <property type="project" value="UniProtKB"/>
</dbReference>
<dbReference type="GO" id="GO:0043406">
    <property type="term" value="P:positive regulation of MAP kinase activity"/>
    <property type="evidence" value="ECO:0000250"/>
    <property type="project" value="UniProtKB"/>
</dbReference>
<dbReference type="GO" id="GO:0051897">
    <property type="term" value="P:positive regulation of phosphatidylinositol 3-kinase/protein kinase B signal transduction"/>
    <property type="evidence" value="ECO:0000250"/>
    <property type="project" value="UniProtKB"/>
</dbReference>
<dbReference type="InterPro" id="IPR019522">
    <property type="entry name" value="PIK3R5/6"/>
</dbReference>
<dbReference type="PANTHER" id="PTHR15593">
    <property type="entry name" value="PHOSPHATIDYLINOSITOL 3-KINASE REGULATORY SUBUNIT"/>
    <property type="match status" value="1"/>
</dbReference>
<dbReference type="PANTHER" id="PTHR15593:SF2">
    <property type="entry name" value="PHOSPHOINOSITIDE 3-KINASE REGULATORY SUBUNIT 5"/>
    <property type="match status" value="1"/>
</dbReference>
<dbReference type="Pfam" id="PF10486">
    <property type="entry name" value="PI3K_1B_p101"/>
    <property type="match status" value="1"/>
</dbReference>
<name>PI3R5_XENLA</name>